<organism>
    <name type="scientific">Pan troglodytes</name>
    <name type="common">Chimpanzee</name>
    <dbReference type="NCBI Taxonomy" id="9598"/>
    <lineage>
        <taxon>Eukaryota</taxon>
        <taxon>Metazoa</taxon>
        <taxon>Chordata</taxon>
        <taxon>Craniata</taxon>
        <taxon>Vertebrata</taxon>
        <taxon>Euteleostomi</taxon>
        <taxon>Mammalia</taxon>
        <taxon>Eutheria</taxon>
        <taxon>Euarchontoglires</taxon>
        <taxon>Primates</taxon>
        <taxon>Haplorrhini</taxon>
        <taxon>Catarrhini</taxon>
        <taxon>Hominidae</taxon>
        <taxon>Pan</taxon>
    </lineage>
</organism>
<keyword id="KW-0130">Cell adhesion</keyword>
<keyword id="KW-1015">Disulfide bond</keyword>
<keyword id="KW-0325">Glycoprotein</keyword>
<keyword id="KW-0393">Immunoglobulin domain</keyword>
<keyword id="KW-0430">Lectin</keyword>
<keyword id="KW-0472">Membrane</keyword>
<keyword id="KW-1185">Reference proteome</keyword>
<keyword id="KW-0677">Repeat</keyword>
<keyword id="KW-0732">Signal</keyword>
<keyword id="KW-0812">Transmembrane</keyword>
<keyword id="KW-1133">Transmembrane helix</keyword>
<proteinExistence type="evidence at transcript level"/>
<protein>
    <recommendedName>
        <fullName>Sialic acid-binding Ig-like lectin 13</fullName>
        <shortName>Siglec-13</shortName>
    </recommendedName>
</protein>
<name>SIG13_PANTR</name>
<sequence>MLPLLLPLLWAGALALEGIFQLEVPESVTVQEGLCVFVPCTFFYPRHTFIKISLACGYWFREGDNPLRDAPVATNDPARQVREETRGRFRLLGNPREKNCSLSIRDARRRDSGSYFFRVEEAMMKYNYKDPPLSVHVTALTHRPDILIPGALKSGRPRNLVCSVPWACEQGTPPIFSWIGTSVSPLSPTTALSSVVTLIPQPQDHGSRLTCQVTLPGAGVTTTRTVRLNVSYPPQNLTLTVFQGDGTASTTLRNESSLQVLEGQSLRLVCAVDSNPPARLSWAQDNLILSPSQPNPGMLELPQMHLRNEGEFTCQARNPLGSQQVSLRLFVQRKSGPMAEVVLVAIGEAAVKILLLFLCLIILRVKSHRRKAAKAATGVEAAKVVKG</sequence>
<reference key="1">
    <citation type="journal article" date="2004" name="Proc. Natl. Acad. Sci. U.S.A.">
        <title>Large-scale sequencing of the CD33-related Siglec gene cluster in five mammalian species reveals rapid evolution by multiple mechanisms.</title>
        <authorList>
            <person name="Angata T."/>
            <person name="Margulies E.H."/>
            <person name="Green E.D."/>
            <person name="Varki A."/>
        </authorList>
    </citation>
    <scope>NUCLEOTIDE SEQUENCE [MRNA]</scope>
</reference>
<feature type="signal peptide" evidence="2">
    <location>
        <begin position="1"/>
        <end position="15"/>
    </location>
</feature>
<feature type="chain" id="PRO_0000014952" description="Sialic acid-binding Ig-like lectin 13">
    <location>
        <begin position="16"/>
        <end position="387"/>
    </location>
</feature>
<feature type="topological domain" description="Extracellular" evidence="2">
    <location>
        <begin position="16"/>
        <end position="341"/>
    </location>
</feature>
<feature type="transmembrane region" description="Helical" evidence="2">
    <location>
        <begin position="342"/>
        <end position="362"/>
    </location>
</feature>
<feature type="topological domain" description="Cytoplasmic" evidence="2">
    <location>
        <begin position="363"/>
        <end position="387"/>
    </location>
</feature>
<feature type="domain" description="Ig-like V-type">
    <location>
        <begin position="16"/>
        <end position="138"/>
    </location>
</feature>
<feature type="domain" description="Ig-like C2-type 1">
    <location>
        <begin position="144"/>
        <end position="227"/>
    </location>
</feature>
<feature type="domain" description="Ig-like C2-type 2">
    <location>
        <begin position="234"/>
        <end position="326"/>
    </location>
</feature>
<feature type="binding site" evidence="1">
    <location>
        <position position="118"/>
    </location>
    <ligand>
        <name>N-acetylneuraminate</name>
        <dbReference type="ChEBI" id="CHEBI:35418"/>
    </ligand>
</feature>
<feature type="glycosylation site" description="N-linked (GlcNAc...) asparagine" evidence="2">
    <location>
        <position position="99"/>
    </location>
</feature>
<feature type="glycosylation site" description="N-linked (GlcNAc...) asparagine" evidence="2">
    <location>
        <position position="229"/>
    </location>
</feature>
<feature type="glycosylation site" description="N-linked (GlcNAc...) asparagine" evidence="2">
    <location>
        <position position="236"/>
    </location>
</feature>
<feature type="glycosylation site" description="N-linked (GlcNAc...) asparagine" evidence="2">
    <location>
        <position position="254"/>
    </location>
</feature>
<feature type="disulfide bond" evidence="3">
    <location>
        <begin position="35"/>
        <end position="168"/>
    </location>
</feature>
<feature type="disulfide bond" evidence="3">
    <location>
        <begin position="40"/>
        <end position="100"/>
    </location>
</feature>
<feature type="disulfide bond" evidence="3">
    <location>
        <begin position="162"/>
        <end position="211"/>
    </location>
</feature>
<feature type="disulfide bond" evidence="3">
    <location>
        <begin position="270"/>
        <end position="314"/>
    </location>
</feature>
<gene>
    <name type="primary">SIGLEC13</name>
</gene>
<comment type="function">
    <text evidence="1">Putative adhesion molecule that mediates sialic-acid dependent binding to cells.</text>
</comment>
<comment type="subcellular location">
    <subcellularLocation>
        <location>Membrane</location>
        <topology>Single-pass type I membrane protein</topology>
    </subcellularLocation>
</comment>
<comment type="similarity">
    <text evidence="4">Belongs to the immunoglobulin superfamily. SIGLEC (sialic acid binding Ig-like lectin) family.</text>
</comment>
<evidence type="ECO:0000250" key="1"/>
<evidence type="ECO:0000255" key="2"/>
<evidence type="ECO:0000255" key="3">
    <source>
        <dbReference type="PROSITE-ProRule" id="PRU00114"/>
    </source>
</evidence>
<evidence type="ECO:0000305" key="4"/>
<dbReference type="EMBL" id="AY485345">
    <property type="protein sequence ID" value="AAS55863.1"/>
    <property type="molecule type" value="mRNA"/>
</dbReference>
<dbReference type="RefSeq" id="NP_001036087.1">
    <property type="nucleotide sequence ID" value="NM_001042622.1"/>
</dbReference>
<dbReference type="SMR" id="Q64JA4"/>
<dbReference type="STRING" id="9598.ENSPTRP00000054310"/>
<dbReference type="GlyCosmos" id="Q64JA4">
    <property type="glycosylation" value="4 sites, No reported glycans"/>
</dbReference>
<dbReference type="PaxDb" id="9598-ENSPTRP00000054310"/>
<dbReference type="GeneID" id="732483"/>
<dbReference type="KEGG" id="ptr:732483"/>
<dbReference type="CTD" id="732483"/>
<dbReference type="eggNOG" id="ENOG502SKMX">
    <property type="taxonomic scope" value="Eukaryota"/>
</dbReference>
<dbReference type="InParanoid" id="Q64JA4"/>
<dbReference type="Proteomes" id="UP000002277">
    <property type="component" value="Unplaced"/>
</dbReference>
<dbReference type="GO" id="GO:0005886">
    <property type="term" value="C:plasma membrane"/>
    <property type="evidence" value="ECO:0000318"/>
    <property type="project" value="GO_Central"/>
</dbReference>
<dbReference type="GO" id="GO:0030246">
    <property type="term" value="F:carbohydrate binding"/>
    <property type="evidence" value="ECO:0007669"/>
    <property type="project" value="UniProtKB-KW"/>
</dbReference>
<dbReference type="GO" id="GO:0033691">
    <property type="term" value="F:sialic acid binding"/>
    <property type="evidence" value="ECO:0000318"/>
    <property type="project" value="GO_Central"/>
</dbReference>
<dbReference type="GO" id="GO:0007155">
    <property type="term" value="P:cell adhesion"/>
    <property type="evidence" value="ECO:0000318"/>
    <property type="project" value="GO_Central"/>
</dbReference>
<dbReference type="FunFam" id="2.60.40.10:FF:000912">
    <property type="entry name" value="Myeloid cell surface antigen CD33"/>
    <property type="match status" value="1"/>
</dbReference>
<dbReference type="FunFam" id="2.60.40.10:FF:000829">
    <property type="entry name" value="Sialic acid-binding Ig-like lectin 8"/>
    <property type="match status" value="1"/>
</dbReference>
<dbReference type="Gene3D" id="2.60.40.10">
    <property type="entry name" value="Immunoglobulins"/>
    <property type="match status" value="3"/>
</dbReference>
<dbReference type="InterPro" id="IPR007110">
    <property type="entry name" value="Ig-like_dom"/>
</dbReference>
<dbReference type="InterPro" id="IPR036179">
    <property type="entry name" value="Ig-like_dom_sf"/>
</dbReference>
<dbReference type="InterPro" id="IPR013783">
    <property type="entry name" value="Ig-like_fold"/>
</dbReference>
<dbReference type="InterPro" id="IPR003599">
    <property type="entry name" value="Ig_sub"/>
</dbReference>
<dbReference type="InterPro" id="IPR003598">
    <property type="entry name" value="Ig_sub2"/>
</dbReference>
<dbReference type="InterPro" id="IPR013106">
    <property type="entry name" value="Ig_V-set"/>
</dbReference>
<dbReference type="InterPro" id="IPR051036">
    <property type="entry name" value="SIGLEC"/>
</dbReference>
<dbReference type="PANTHER" id="PTHR12035:SF136">
    <property type="entry name" value="MYELOID CELL SURFACE ANTIGEN CD33"/>
    <property type="match status" value="1"/>
</dbReference>
<dbReference type="PANTHER" id="PTHR12035">
    <property type="entry name" value="SIALIC ACID BINDING IMMUNOGLOBULIN-LIKE LECTIN"/>
    <property type="match status" value="1"/>
</dbReference>
<dbReference type="Pfam" id="PF13895">
    <property type="entry name" value="Ig_2"/>
    <property type="match status" value="1"/>
</dbReference>
<dbReference type="Pfam" id="PF07686">
    <property type="entry name" value="V-set"/>
    <property type="match status" value="1"/>
</dbReference>
<dbReference type="SMART" id="SM00409">
    <property type="entry name" value="IG"/>
    <property type="match status" value="3"/>
</dbReference>
<dbReference type="SMART" id="SM00408">
    <property type="entry name" value="IGc2"/>
    <property type="match status" value="1"/>
</dbReference>
<dbReference type="SUPFAM" id="SSF48726">
    <property type="entry name" value="Immunoglobulin"/>
    <property type="match status" value="3"/>
</dbReference>
<dbReference type="PROSITE" id="PS50835">
    <property type="entry name" value="IG_LIKE"/>
    <property type="match status" value="2"/>
</dbReference>
<accession>Q64JA4</accession>